<dbReference type="EMBL" id="CP001001">
    <property type="protein sequence ID" value="ACB25490.1"/>
    <property type="molecule type" value="Genomic_DNA"/>
</dbReference>
<dbReference type="RefSeq" id="WP_012320451.1">
    <property type="nucleotide sequence ID" value="NC_010505.1"/>
</dbReference>
<dbReference type="STRING" id="426355.Mrad2831_3513"/>
<dbReference type="GeneID" id="6139566"/>
<dbReference type="KEGG" id="mrd:Mrad2831_3513"/>
<dbReference type="eggNOG" id="COG5328">
    <property type="taxonomic scope" value="Bacteria"/>
</dbReference>
<dbReference type="HOGENOM" id="CLU_112904_0_0_5"/>
<dbReference type="OrthoDB" id="9798434at2"/>
<dbReference type="Proteomes" id="UP000006589">
    <property type="component" value="Chromosome"/>
</dbReference>
<dbReference type="HAMAP" id="MF_00678">
    <property type="entry name" value="UPF0262"/>
    <property type="match status" value="1"/>
</dbReference>
<dbReference type="InterPro" id="IPR008321">
    <property type="entry name" value="UCP032146"/>
</dbReference>
<dbReference type="NCBIfam" id="NF002769">
    <property type="entry name" value="PRK02853.1"/>
    <property type="match status" value="1"/>
</dbReference>
<dbReference type="Pfam" id="PF06793">
    <property type="entry name" value="UPF0262"/>
    <property type="match status" value="1"/>
</dbReference>
<dbReference type="PIRSF" id="PIRSF032146">
    <property type="entry name" value="UCP032146"/>
    <property type="match status" value="1"/>
</dbReference>
<reference key="1">
    <citation type="submission" date="2008-03" db="EMBL/GenBank/DDBJ databases">
        <title>Complete sequence of chromosome of Methylobacterium radiotolerans JCM 2831.</title>
        <authorList>
            <consortium name="US DOE Joint Genome Institute"/>
            <person name="Copeland A."/>
            <person name="Lucas S."/>
            <person name="Lapidus A."/>
            <person name="Glavina del Rio T."/>
            <person name="Dalin E."/>
            <person name="Tice H."/>
            <person name="Bruce D."/>
            <person name="Goodwin L."/>
            <person name="Pitluck S."/>
            <person name="Kiss H."/>
            <person name="Brettin T."/>
            <person name="Detter J.C."/>
            <person name="Han C."/>
            <person name="Kuske C.R."/>
            <person name="Schmutz J."/>
            <person name="Larimer F."/>
            <person name="Land M."/>
            <person name="Hauser L."/>
            <person name="Kyrpides N."/>
            <person name="Mikhailova N."/>
            <person name="Marx C.J."/>
            <person name="Richardson P."/>
        </authorList>
    </citation>
    <scope>NUCLEOTIDE SEQUENCE [LARGE SCALE GENOMIC DNA]</scope>
    <source>
        <strain>ATCC 27329 / DSM 1819 / JCM 2831 / NBRC 15690 / NCIMB 10815 / 0-1</strain>
    </source>
</reference>
<name>Y3513_METRJ</name>
<feature type="chain" id="PRO_1000131648" description="UPF0262 protein Mrad2831_3513">
    <location>
        <begin position="1"/>
        <end position="160"/>
    </location>
</feature>
<accession>B1LUQ4</accession>
<protein>
    <recommendedName>
        <fullName evidence="1">UPF0262 protein Mrad2831_3513</fullName>
    </recommendedName>
</protein>
<evidence type="ECO:0000255" key="1">
    <source>
        <dbReference type="HAMAP-Rule" id="MF_00678"/>
    </source>
</evidence>
<sequence>MAEKQRGPNRLAKVSLDEASIARGNPDQEHERAIALFDILEDNSFTIPGREGPYALTLGLVENKLSFAIATVDGEPVMTHLLSLTPFRRVIRDYEMICESYYNAIRTASPSQIEAIDMGRRGLHNEASETLKQRLEGKVDLDHDTARRLFTLIFALHWKG</sequence>
<gene>
    <name type="ordered locus">Mrad2831_3513</name>
</gene>
<proteinExistence type="inferred from homology"/>
<comment type="similarity">
    <text evidence="1">Belongs to the UPF0262 family.</text>
</comment>
<organism>
    <name type="scientific">Methylobacterium radiotolerans (strain ATCC 27329 / DSM 1819 / JCM 2831 / NBRC 15690 / NCIMB 10815 / 0-1)</name>
    <dbReference type="NCBI Taxonomy" id="426355"/>
    <lineage>
        <taxon>Bacteria</taxon>
        <taxon>Pseudomonadati</taxon>
        <taxon>Pseudomonadota</taxon>
        <taxon>Alphaproteobacteria</taxon>
        <taxon>Hyphomicrobiales</taxon>
        <taxon>Methylobacteriaceae</taxon>
        <taxon>Methylobacterium</taxon>
    </lineage>
</organism>